<protein>
    <recommendedName>
        <fullName evidence="14">Early light-induced protein 1, chloroplastic</fullName>
    </recommendedName>
</protein>
<name>ELIP1_ARATH</name>
<keyword id="KW-0150">Chloroplast</keyword>
<keyword id="KW-0472">Membrane</keyword>
<keyword id="KW-0602">Photosynthesis</keyword>
<keyword id="KW-0603">Photosystem I</keyword>
<keyword id="KW-0604">Photosystem II</keyword>
<keyword id="KW-0934">Plastid</keyword>
<keyword id="KW-1185">Reference proteome</keyword>
<keyword id="KW-0793">Thylakoid</keyword>
<keyword id="KW-0809">Transit peptide</keyword>
<keyword id="KW-0812">Transmembrane</keyword>
<keyword id="KW-1133">Transmembrane helix</keyword>
<proteinExistence type="evidence at protein level"/>
<feature type="transit peptide" description="Chloroplast" evidence="9">
    <location>
        <begin position="1"/>
        <end position="46"/>
    </location>
</feature>
<feature type="chain" id="PRO_0000422364" description="Early light-induced protein 1, chloroplastic">
    <location>
        <begin position="47"/>
        <end position="195"/>
    </location>
</feature>
<feature type="transmembrane region" description="Helical" evidence="2">
    <location>
        <begin position="104"/>
        <end position="124"/>
    </location>
</feature>
<feature type="transmembrane region" description="Helical" evidence="2">
    <location>
        <begin position="131"/>
        <end position="151"/>
    </location>
</feature>
<feature type="transmembrane region" description="Helical" evidence="2">
    <location>
        <begin position="175"/>
        <end position="195"/>
    </location>
</feature>
<feature type="region of interest" description="Disordered" evidence="3">
    <location>
        <begin position="46"/>
        <end position="81"/>
    </location>
</feature>
<feature type="compositionally biased region" description="Low complexity" evidence="3">
    <location>
        <begin position="56"/>
        <end position="68"/>
    </location>
</feature>
<feature type="compositionally biased region" description="Pro residues" evidence="3">
    <location>
        <begin position="69"/>
        <end position="79"/>
    </location>
</feature>
<dbReference type="EMBL" id="U89014">
    <property type="protein sequence ID" value="AAB88391.1"/>
    <property type="molecule type" value="mRNA"/>
</dbReference>
<dbReference type="EMBL" id="AB022223">
    <property type="protein sequence ID" value="BAB01259.1"/>
    <property type="molecule type" value="Genomic_DNA"/>
</dbReference>
<dbReference type="EMBL" id="CP002686">
    <property type="protein sequence ID" value="AEE76682.1"/>
    <property type="molecule type" value="Genomic_DNA"/>
</dbReference>
<dbReference type="EMBL" id="AY057560">
    <property type="protein sequence ID" value="AAL09799.1"/>
    <property type="molecule type" value="mRNA"/>
</dbReference>
<dbReference type="EMBL" id="AY075672">
    <property type="protein sequence ID" value="AAL77679.1"/>
    <property type="molecule type" value="mRNA"/>
</dbReference>
<dbReference type="EMBL" id="AY097423">
    <property type="protein sequence ID" value="AAM19939.1"/>
    <property type="molecule type" value="mRNA"/>
</dbReference>
<dbReference type="EMBL" id="AY085317">
    <property type="protein sequence ID" value="AAM62548.1"/>
    <property type="molecule type" value="mRNA"/>
</dbReference>
<dbReference type="RefSeq" id="NP_188923.1">
    <property type="nucleotide sequence ID" value="NM_113183.4"/>
</dbReference>
<dbReference type="SMR" id="P93735"/>
<dbReference type="BioGRID" id="7187">
    <property type="interactions" value="23"/>
</dbReference>
<dbReference type="FunCoup" id="P93735">
    <property type="interactions" value="58"/>
</dbReference>
<dbReference type="IntAct" id="P93735">
    <property type="interactions" value="23"/>
</dbReference>
<dbReference type="STRING" id="3702.P93735"/>
<dbReference type="PaxDb" id="3702-AT3G22840.1"/>
<dbReference type="ProteomicsDB" id="222319"/>
<dbReference type="EnsemblPlants" id="AT3G22840.1">
    <property type="protein sequence ID" value="AT3G22840.1"/>
    <property type="gene ID" value="AT3G22840"/>
</dbReference>
<dbReference type="GeneID" id="821855"/>
<dbReference type="Gramene" id="AT3G22840.1">
    <property type="protein sequence ID" value="AT3G22840.1"/>
    <property type="gene ID" value="AT3G22840"/>
</dbReference>
<dbReference type="KEGG" id="ath:AT3G22840"/>
<dbReference type="Araport" id="AT3G22840"/>
<dbReference type="TAIR" id="AT3G22840">
    <property type="gene designation" value="ELIP1"/>
</dbReference>
<dbReference type="eggNOG" id="ENOG502RZBJ">
    <property type="taxonomic scope" value="Eukaryota"/>
</dbReference>
<dbReference type="HOGENOM" id="CLU_099630_0_0_1"/>
<dbReference type="InParanoid" id="P93735"/>
<dbReference type="OMA" id="MAMNSFV"/>
<dbReference type="OrthoDB" id="513190at2759"/>
<dbReference type="PhylomeDB" id="P93735"/>
<dbReference type="PRO" id="PR:P93735"/>
<dbReference type="Proteomes" id="UP000006548">
    <property type="component" value="Chromosome 3"/>
</dbReference>
<dbReference type="ExpressionAtlas" id="P93735">
    <property type="expression patterns" value="baseline and differential"/>
</dbReference>
<dbReference type="GO" id="GO:0009535">
    <property type="term" value="C:chloroplast thylakoid membrane"/>
    <property type="evidence" value="ECO:0000314"/>
    <property type="project" value="UniProtKB"/>
</dbReference>
<dbReference type="GO" id="GO:0009522">
    <property type="term" value="C:photosystem I"/>
    <property type="evidence" value="ECO:0007669"/>
    <property type="project" value="UniProtKB-KW"/>
</dbReference>
<dbReference type="GO" id="GO:0009523">
    <property type="term" value="C:photosystem II"/>
    <property type="evidence" value="ECO:0007669"/>
    <property type="project" value="UniProtKB-KW"/>
</dbReference>
<dbReference type="GO" id="GO:0071483">
    <property type="term" value="P:cellular response to blue light"/>
    <property type="evidence" value="ECO:0000270"/>
    <property type="project" value="UniProtKB"/>
</dbReference>
<dbReference type="GO" id="GO:0071490">
    <property type="term" value="P:cellular response to far red light"/>
    <property type="evidence" value="ECO:0000270"/>
    <property type="project" value="UniProtKB"/>
</dbReference>
<dbReference type="GO" id="GO:0034605">
    <property type="term" value="P:cellular response to heat"/>
    <property type="evidence" value="ECO:0000270"/>
    <property type="project" value="UniProtKB"/>
</dbReference>
<dbReference type="GO" id="GO:0071486">
    <property type="term" value="P:cellular response to high light intensity"/>
    <property type="evidence" value="ECO:0000270"/>
    <property type="project" value="UniProtKB"/>
</dbReference>
<dbReference type="GO" id="GO:0071491">
    <property type="term" value="P:cellular response to red light"/>
    <property type="evidence" value="ECO:0000270"/>
    <property type="project" value="UniProtKB"/>
</dbReference>
<dbReference type="GO" id="GO:0071492">
    <property type="term" value="P:cellular response to UV-A"/>
    <property type="evidence" value="ECO:0000270"/>
    <property type="project" value="UniProtKB"/>
</dbReference>
<dbReference type="GO" id="GO:0010117">
    <property type="term" value="P:photoprotection"/>
    <property type="evidence" value="ECO:0000315"/>
    <property type="project" value="UniProtKB"/>
</dbReference>
<dbReference type="GO" id="GO:0015979">
    <property type="term" value="P:photosynthesis"/>
    <property type="evidence" value="ECO:0007669"/>
    <property type="project" value="UniProtKB-KW"/>
</dbReference>
<dbReference type="GO" id="GO:0010030">
    <property type="term" value="P:positive regulation of seed germination"/>
    <property type="evidence" value="ECO:0000315"/>
    <property type="project" value="UniProtKB"/>
</dbReference>
<dbReference type="GO" id="GO:0010380">
    <property type="term" value="P:regulation of chlorophyll biosynthetic process"/>
    <property type="evidence" value="ECO:0000250"/>
    <property type="project" value="UniProtKB"/>
</dbReference>
<dbReference type="GO" id="GO:0009409">
    <property type="term" value="P:response to cold"/>
    <property type="evidence" value="ECO:0000270"/>
    <property type="project" value="TAIR"/>
</dbReference>
<dbReference type="GO" id="GO:0009416">
    <property type="term" value="P:response to light stimulus"/>
    <property type="evidence" value="ECO:0000270"/>
    <property type="project" value="UniProtKB"/>
</dbReference>
<dbReference type="InterPro" id="IPR022796">
    <property type="entry name" value="Chloroa_b-bind"/>
</dbReference>
<dbReference type="PANTHER" id="PTHR14154">
    <property type="entry name" value="UPF0041 BRAIN PROTEIN 44-RELATED"/>
    <property type="match status" value="1"/>
</dbReference>
<dbReference type="Pfam" id="PF00504">
    <property type="entry name" value="Chloroa_b-bind"/>
    <property type="match status" value="1"/>
</dbReference>
<dbReference type="SUPFAM" id="SSF103511">
    <property type="entry name" value="Chlorophyll a-b binding protein"/>
    <property type="match status" value="1"/>
</dbReference>
<accession>P93735</accession>
<comment type="function">
    <text evidence="1 6 7 8 11">Prevents excess accumulation of free chlorophyll by inhibiting the entire chlorophyll biosynthesis pathway (e.g. 5-aminolevulinate synthesis and Mg-protoporphyrin IX chelatase activity), and hence prevent photooxidative stress (By similarity). Probably involved in the integration of pigments into the mature light-harvesting pigment-protein complexes. Light-harvesting chlorophyll (LHC) a/b-binding protein required to ensure a high rate of chlorophyll accumulation during deetiolation in continuous high light. Involved in seed germination. May fulfill a photoprotective functions.</text>
</comment>
<comment type="subcellular location">
    <subcellularLocation>
        <location evidence="4 9 10">Plastid</location>
        <location evidence="4 9 10">Chloroplast thylakoid membrane</location>
        <topology evidence="2">Multi-pass membrane protein</topology>
    </subcellularLocation>
    <text evidence="1">Associated with both photosystems I and II (By similarity). Coisolates equally with monomeric (mLhcb) and trimeric (tLhcb) populations of the major LHC from photosystem II (PSII) in response to 2 hours light stress.</text>
</comment>
<comment type="developmental stage">
    <text evidence="7">Appears transiently during greening of etiolated seedlings and disappears before chloroplast development is completed.</text>
</comment>
<comment type="induction">
    <text evidence="4 5 6 7 10 12 13">Levels increase linearly with increasing light intensities and correlate with the degree of photoinactivation and photodamage of PSII reaction centers (at protein level). Induced by high-intensity light, at both cold and warm temperatures (e.g. 4 and 22 degrees Celsius) (at protein level); quickly and transiently induced during deetiolation, and accumulates in green seedlings following increases in light intensity (PubMed:31604812). Induced by UV-A, red, far-red and blue lights illumination in a phytochrome A and phytochrome B-dependent manner; this induction is promoted by HY5. The COP9 signalosome is involved in dark-mediated repression. Accumulates upon heat shock. Transcript levels follow a circadian cycle, with highest levels 2 hours after light, without protein accumulation. In light stress-preadapted or senescent leaves exposed to light stress there is a lack of correlation between transcript and protein accumulation; transcripts accumulate in red and yellow leaves exposed to high light, but not proteins.</text>
</comment>
<comment type="disruption phenotype">
    <text evidence="7 8 11">Reduced greening during deetiolation in continuous high light, with a reduced ratio between chlorophylls a and especially at the highest irradiances. Slight reduction in the rate of chlorophyll accumulation during greening at moderate light intensities, and lower zeaxanthin accumulation in high light conditions. Normal sensitivity to photoinhibition and photooxidation. Impaired seed germination, especially in high light conditions and at warm to hot temperatures (greater than 22 degrees Celsius).</text>
</comment>
<comment type="similarity">
    <text evidence="16">Belongs to the ELIP/psbS family.</text>
</comment>
<gene>
    <name evidence="14" type="primary">ELIP1</name>
    <name evidence="15" type="synonym">ELIP</name>
    <name evidence="17" type="ordered locus">At3g22840</name>
    <name evidence="18" type="ORF">MWI23.21</name>
</gene>
<sequence length="195" mass="20325">MATASFNMQSVFAGGLTTRKINTNKLFSAGSFPNLKRNYPVGVRCMAEGGPTNEDSSPAPSTSAAQPLPKSPSPPPPMKPKVSTKFSDLLAFSGPAPERINGRLAMVGFVAALAVELSKGENVLAQISDGGVSWFLGTTAILTLASLVPLFKGISVESKSKGIMTSDAELWNGRFAMLGLVALAFTEFVKGGTLV</sequence>
<organism>
    <name type="scientific">Arabidopsis thaliana</name>
    <name type="common">Mouse-ear cress</name>
    <dbReference type="NCBI Taxonomy" id="3702"/>
    <lineage>
        <taxon>Eukaryota</taxon>
        <taxon>Viridiplantae</taxon>
        <taxon>Streptophyta</taxon>
        <taxon>Embryophyta</taxon>
        <taxon>Tracheophyta</taxon>
        <taxon>Spermatophyta</taxon>
        <taxon>Magnoliopsida</taxon>
        <taxon>eudicotyledons</taxon>
        <taxon>Gunneridae</taxon>
        <taxon>Pentapetalae</taxon>
        <taxon>rosids</taxon>
        <taxon>malvids</taxon>
        <taxon>Brassicales</taxon>
        <taxon>Brassicaceae</taxon>
        <taxon>Camelineae</taxon>
        <taxon>Arabidopsis</taxon>
    </lineage>
</organism>
<evidence type="ECO:0000250" key="1"/>
<evidence type="ECO:0000255" key="2"/>
<evidence type="ECO:0000256" key="3">
    <source>
        <dbReference type="SAM" id="MobiDB-lite"/>
    </source>
</evidence>
<evidence type="ECO:0000269" key="4">
    <source>
    </source>
</evidence>
<evidence type="ECO:0000269" key="5">
    <source>
    </source>
</evidence>
<evidence type="ECO:0000269" key="6">
    <source>
    </source>
</evidence>
<evidence type="ECO:0000269" key="7">
    <source>
    </source>
</evidence>
<evidence type="ECO:0000269" key="8">
    <source>
    </source>
</evidence>
<evidence type="ECO:0000269" key="9">
    <source>
    </source>
</evidence>
<evidence type="ECO:0000269" key="10">
    <source>
    </source>
</evidence>
<evidence type="ECO:0000269" key="11">
    <source>
    </source>
</evidence>
<evidence type="ECO:0000269" key="12">
    <source>
    </source>
</evidence>
<evidence type="ECO:0000269" key="13">
    <source ref="1"/>
</evidence>
<evidence type="ECO:0000303" key="14">
    <source>
    </source>
</evidence>
<evidence type="ECO:0000303" key="15">
    <source ref="1"/>
</evidence>
<evidence type="ECO:0000305" key="16"/>
<evidence type="ECO:0000312" key="17">
    <source>
        <dbReference type="Araport" id="AT3G22840"/>
    </source>
</evidence>
<evidence type="ECO:0000312" key="18">
    <source>
        <dbReference type="EMBL" id="BAB01259.1"/>
    </source>
</evidence>
<reference key="1">
    <citation type="online journal article" date="1997" name="Plant Gene Register">
        <title>Characterization of a cDNA encoding the early light-inducible protein (ELIP) from Arabidopsis.</title>
        <authorList>
            <person name="Moscovici-Kadouri S."/>
            <person name="Chamovitz D.A."/>
        </authorList>
        <locator>PGR97-155</locator>
    </citation>
    <scope>NUCLEOTIDE SEQUENCE [MRNA]</scope>
    <scope>INDUCTION BY LIGHT</scope>
    <source>
        <strain>cv. Columbia</strain>
    </source>
</reference>
<reference key="2">
    <citation type="journal article" date="2000" name="DNA Res.">
        <title>Structural analysis of Arabidopsis thaliana chromosome 3. I. Sequence features of the regions of 4,504,864 bp covered by sixty P1 and TAC clones.</title>
        <authorList>
            <person name="Sato S."/>
            <person name="Nakamura Y."/>
            <person name="Kaneko T."/>
            <person name="Katoh T."/>
            <person name="Asamizu E."/>
            <person name="Tabata S."/>
        </authorList>
    </citation>
    <scope>NUCLEOTIDE SEQUENCE [LARGE SCALE GENOMIC DNA]</scope>
    <source>
        <strain>cv. Columbia</strain>
    </source>
</reference>
<reference key="3">
    <citation type="journal article" date="2017" name="Plant J.">
        <title>Araport11: a complete reannotation of the Arabidopsis thaliana reference genome.</title>
        <authorList>
            <person name="Cheng C.Y."/>
            <person name="Krishnakumar V."/>
            <person name="Chan A.P."/>
            <person name="Thibaud-Nissen F."/>
            <person name="Schobel S."/>
            <person name="Town C.D."/>
        </authorList>
    </citation>
    <scope>GENOME REANNOTATION</scope>
    <source>
        <strain>cv. Columbia</strain>
    </source>
</reference>
<reference key="4">
    <citation type="journal article" date="2003" name="Science">
        <title>Empirical analysis of transcriptional activity in the Arabidopsis genome.</title>
        <authorList>
            <person name="Yamada K."/>
            <person name="Lim J."/>
            <person name="Dale J.M."/>
            <person name="Chen H."/>
            <person name="Shinn P."/>
            <person name="Palm C.J."/>
            <person name="Southwick A.M."/>
            <person name="Wu H.C."/>
            <person name="Kim C.J."/>
            <person name="Nguyen M."/>
            <person name="Pham P.K."/>
            <person name="Cheuk R.F."/>
            <person name="Karlin-Newmann G."/>
            <person name="Liu S.X."/>
            <person name="Lam B."/>
            <person name="Sakano H."/>
            <person name="Wu T."/>
            <person name="Yu G."/>
            <person name="Miranda M."/>
            <person name="Quach H.L."/>
            <person name="Tripp M."/>
            <person name="Chang C.H."/>
            <person name="Lee J.M."/>
            <person name="Toriumi M.J."/>
            <person name="Chan M.M."/>
            <person name="Tang C.C."/>
            <person name="Onodera C.S."/>
            <person name="Deng J.M."/>
            <person name="Akiyama K."/>
            <person name="Ansari Y."/>
            <person name="Arakawa T."/>
            <person name="Banh J."/>
            <person name="Banno F."/>
            <person name="Bowser L."/>
            <person name="Brooks S.Y."/>
            <person name="Carninci P."/>
            <person name="Chao Q."/>
            <person name="Choy N."/>
            <person name="Enju A."/>
            <person name="Goldsmith A.D."/>
            <person name="Gurjal M."/>
            <person name="Hansen N.F."/>
            <person name="Hayashizaki Y."/>
            <person name="Johnson-Hopson C."/>
            <person name="Hsuan V.W."/>
            <person name="Iida K."/>
            <person name="Karnes M."/>
            <person name="Khan S."/>
            <person name="Koesema E."/>
            <person name="Ishida J."/>
            <person name="Jiang P.X."/>
            <person name="Jones T."/>
            <person name="Kawai J."/>
            <person name="Kamiya A."/>
            <person name="Meyers C."/>
            <person name="Nakajima M."/>
            <person name="Narusaka M."/>
            <person name="Seki M."/>
            <person name="Sakurai T."/>
            <person name="Satou M."/>
            <person name="Tamse R."/>
            <person name="Vaysberg M."/>
            <person name="Wallender E.K."/>
            <person name="Wong C."/>
            <person name="Yamamura Y."/>
            <person name="Yuan S."/>
            <person name="Shinozaki K."/>
            <person name="Davis R.W."/>
            <person name="Theologis A."/>
            <person name="Ecker J.R."/>
        </authorList>
    </citation>
    <scope>NUCLEOTIDE SEQUENCE [LARGE SCALE MRNA]</scope>
    <source>
        <strain>cv. Columbia</strain>
    </source>
</reference>
<reference key="5">
    <citation type="submission" date="2002-03" db="EMBL/GenBank/DDBJ databases">
        <title>Full-length cDNA from Arabidopsis thaliana.</title>
        <authorList>
            <person name="Brover V.V."/>
            <person name="Troukhan M.E."/>
            <person name="Alexandrov N.A."/>
            <person name="Lu Y.-P."/>
            <person name="Flavell R.B."/>
            <person name="Feldmann K.A."/>
        </authorList>
    </citation>
    <scope>NUCLEOTIDE SEQUENCE [LARGE SCALE MRNA]</scope>
</reference>
<reference key="6">
    <citation type="journal article" date="2000" name="Proc. Natl. Acad. Sci. U.S.A.">
        <title>Light stress-regulated two-helix proteins in Arabidopsis thaliana related to the chlorophyll a/b-binding gene family.</title>
        <authorList>
            <person name="Heddad M."/>
            <person name="Adamska I."/>
        </authorList>
    </citation>
    <scope>SUBCELLULAR LOCATION</scope>
    <scope>INDUCTION BY LIGHT</scope>
    <source>
        <strain>cv. Columbia</strain>
    </source>
</reference>
<reference key="7">
    <citation type="journal article" date="2001" name="Plant Physiol.">
        <title>Dissection of the light signal transduction pathways regulating the two early light-induced protein genes in Arabidopsis.</title>
        <authorList>
            <person name="Harari-Steinberg O."/>
            <person name="Ohad I."/>
            <person name="Chamovitz D.A."/>
        </authorList>
    </citation>
    <scope>INDUCTION BY LIGHT</scope>
</reference>
<reference key="8">
    <citation type="journal article" date="2003" name="Proc. Natl. Acad. Sci. U.S.A.">
        <title>Early light-induced proteins protect Arabidopsis from photooxidative stress.</title>
        <authorList>
            <person name="Hutin C."/>
            <person name="Nussaume L."/>
            <person name="Moise N."/>
            <person name="Moya I."/>
            <person name="Kloppstech K."/>
            <person name="Havaux M."/>
        </authorList>
    </citation>
    <scope>FUNCTION IN PHOTOPROTECTION</scope>
    <scope>INDUCTION BY LIGHT</scope>
    <source>
        <strain>cv. Columbia</strain>
    </source>
</reference>
<reference key="9">
    <citation type="journal article" date="2005" name="Plant Mol. Biol.">
        <title>Mutational and expression analysis of ELIP1 and ELIP2 in Arabidopsis thaliana.</title>
        <authorList>
            <person name="Casazza A.P."/>
            <person name="Rossini S."/>
            <person name="Rosso M.G."/>
            <person name="Soave C."/>
        </authorList>
    </citation>
    <scope>FUNCTION</scope>
    <scope>DISRUPTION PHENOTYPE</scope>
    <scope>DEVELOPMENTAL STAGE</scope>
    <scope>INDUCTION BY LIGHT</scope>
    <source>
        <strain>cv. Columbia</strain>
    </source>
</reference>
<reference key="10">
    <citation type="journal article" date="2006" name="FEBS Lett.">
        <title>The role of the N-terminal domain of chloroplast targeting peptides in organellar protein import and miss-sorting.</title>
        <authorList>
            <person name="Bhushan S."/>
            <person name="Kuhn C."/>
            <person name="Berglund A.K."/>
            <person name="Roth C."/>
            <person name="Glaser E."/>
        </authorList>
    </citation>
    <scope>SUBCELLULAR LOCATION</scope>
    <scope>TRANSIT PEPTIDE CLEAVAGE SITE</scope>
</reference>
<reference key="11">
    <citation type="journal article" date="2006" name="Plant Physiol.">
        <title>Suppression of both ELIP1 and ELIP2 in Arabidopsis does not affect tolerance to photoinhibition and photooxidative stress.</title>
        <authorList>
            <person name="Rossini S."/>
            <person name="Casazza A.P."/>
            <person name="Engelmann E.C."/>
            <person name="Havaux M."/>
            <person name="Jennings R.C."/>
            <person name="Soave C."/>
        </authorList>
    </citation>
    <scope>FUNCTION</scope>
    <scope>DISRUPTION PHENOTYPE</scope>
</reference>
<reference key="12">
    <citation type="journal article" date="2006" name="Plant Physiol.">
        <title>Differential expression and localization of early light-induced proteins in Arabidopsis.</title>
        <authorList>
            <person name="Heddad M."/>
            <person name="Noren H."/>
            <person name="Reiser V."/>
            <person name="Dunaeva M."/>
            <person name="Andersson B."/>
            <person name="Adamska I."/>
        </authorList>
    </citation>
    <scope>INDUCTION BY LIGHT</scope>
    <scope>SUBCELLULAR LOCATION</scope>
</reference>
<reference key="13">
    <citation type="journal article" date="2011" name="New Phytol.">
        <title>Inactivation of the ELIP1 and ELIP2 genes affects Arabidopsis seed germination.</title>
        <authorList>
            <person name="Rizza A."/>
            <person name="Boccaccini A."/>
            <person name="Lopez-Vidriero I."/>
            <person name="Costantino P."/>
            <person name="Vittorioso P."/>
        </authorList>
    </citation>
    <scope>FUNCTION</scope>
    <scope>DISRUPTION PHENOTYPE</scope>
    <source>
        <strain>cv. Columbia</strain>
    </source>
</reference>
<reference key="14">
    <citation type="journal article" date="2019" name="Plant Cell">
        <title>ORANGE represses chloroplast biogenesis in etiolated Arabidopsis cotyledons via interaction with TCP14.</title>
        <authorList>
            <person name="Sun T."/>
            <person name="Zhou F."/>
            <person name="Huang X.-Q."/>
            <person name="Chen W.-C."/>
            <person name="Kong M.-J."/>
            <person name="Zhou C.-F."/>
            <person name="Zhuang Z."/>
            <person name="Li L."/>
            <person name="Lu S."/>
        </authorList>
    </citation>
    <scope>INDUCTION BY LIGHT</scope>
    <source>
        <strain>cv. Columbia</strain>
    </source>
</reference>